<protein>
    <recommendedName>
        <fullName evidence="1">Large ribosomal subunit protein bL27</fullName>
    </recommendedName>
    <alternativeName>
        <fullName evidence="3">50S ribosomal protein L27</fullName>
    </alternativeName>
</protein>
<organism>
    <name type="scientific">Glaesserella parasuis serovar 5 (strain SH0165)</name>
    <name type="common">Haemophilus parasuis</name>
    <dbReference type="NCBI Taxonomy" id="557723"/>
    <lineage>
        <taxon>Bacteria</taxon>
        <taxon>Pseudomonadati</taxon>
        <taxon>Pseudomonadota</taxon>
        <taxon>Gammaproteobacteria</taxon>
        <taxon>Pasteurellales</taxon>
        <taxon>Pasteurellaceae</taxon>
        <taxon>Glaesserella</taxon>
    </lineage>
</organism>
<dbReference type="EMBL" id="CP001321">
    <property type="protein sequence ID" value="ACL33526.1"/>
    <property type="molecule type" value="Genomic_DNA"/>
</dbReference>
<dbReference type="RefSeq" id="WP_005711421.1">
    <property type="nucleotide sequence ID" value="NC_011852.1"/>
</dbReference>
<dbReference type="SMR" id="B8F874"/>
<dbReference type="STRING" id="557723.HAPS_2069"/>
<dbReference type="GeneID" id="66619514"/>
<dbReference type="KEGG" id="hap:HAPS_2069"/>
<dbReference type="HOGENOM" id="CLU_095424_4_1_6"/>
<dbReference type="Proteomes" id="UP000006743">
    <property type="component" value="Chromosome"/>
</dbReference>
<dbReference type="GO" id="GO:0022625">
    <property type="term" value="C:cytosolic large ribosomal subunit"/>
    <property type="evidence" value="ECO:0007669"/>
    <property type="project" value="TreeGrafter"/>
</dbReference>
<dbReference type="GO" id="GO:0003735">
    <property type="term" value="F:structural constituent of ribosome"/>
    <property type="evidence" value="ECO:0007669"/>
    <property type="project" value="InterPro"/>
</dbReference>
<dbReference type="GO" id="GO:0006412">
    <property type="term" value="P:translation"/>
    <property type="evidence" value="ECO:0007669"/>
    <property type="project" value="UniProtKB-UniRule"/>
</dbReference>
<dbReference type="FunFam" id="2.40.50.100:FF:000001">
    <property type="entry name" value="50S ribosomal protein L27"/>
    <property type="match status" value="1"/>
</dbReference>
<dbReference type="Gene3D" id="2.40.50.100">
    <property type="match status" value="1"/>
</dbReference>
<dbReference type="HAMAP" id="MF_00539">
    <property type="entry name" value="Ribosomal_bL27"/>
    <property type="match status" value="1"/>
</dbReference>
<dbReference type="InterPro" id="IPR001684">
    <property type="entry name" value="Ribosomal_bL27"/>
</dbReference>
<dbReference type="InterPro" id="IPR018261">
    <property type="entry name" value="Ribosomal_bL27_CS"/>
</dbReference>
<dbReference type="NCBIfam" id="TIGR00062">
    <property type="entry name" value="L27"/>
    <property type="match status" value="1"/>
</dbReference>
<dbReference type="PANTHER" id="PTHR15893:SF0">
    <property type="entry name" value="LARGE RIBOSOMAL SUBUNIT PROTEIN BL27M"/>
    <property type="match status" value="1"/>
</dbReference>
<dbReference type="PANTHER" id="PTHR15893">
    <property type="entry name" value="RIBOSOMAL PROTEIN L27"/>
    <property type="match status" value="1"/>
</dbReference>
<dbReference type="Pfam" id="PF01016">
    <property type="entry name" value="Ribosomal_L27"/>
    <property type="match status" value="1"/>
</dbReference>
<dbReference type="PRINTS" id="PR00063">
    <property type="entry name" value="RIBOSOMALL27"/>
</dbReference>
<dbReference type="SUPFAM" id="SSF110324">
    <property type="entry name" value="Ribosomal L27 protein-like"/>
    <property type="match status" value="1"/>
</dbReference>
<dbReference type="PROSITE" id="PS00831">
    <property type="entry name" value="RIBOSOMAL_L27"/>
    <property type="match status" value="1"/>
</dbReference>
<name>RL27_GLAP5</name>
<evidence type="ECO:0000255" key="1">
    <source>
        <dbReference type="HAMAP-Rule" id="MF_00539"/>
    </source>
</evidence>
<evidence type="ECO:0000256" key="2">
    <source>
        <dbReference type="SAM" id="MobiDB-lite"/>
    </source>
</evidence>
<evidence type="ECO:0000305" key="3"/>
<accession>B8F874</accession>
<comment type="similarity">
    <text evidence="1">Belongs to the bacterial ribosomal protein bL27 family.</text>
</comment>
<keyword id="KW-1185">Reference proteome</keyword>
<keyword id="KW-0687">Ribonucleoprotein</keyword>
<keyword id="KW-0689">Ribosomal protein</keyword>
<sequence>MATKKAGGSTRNGRDSEAKRLGVKRFGGESVLAGSIIVRQRGTKFHAGSNVGMGKDHTLFATADGKVKFEVKGEKNRKYVSIIAE</sequence>
<gene>
    <name evidence="1" type="primary">rpmA</name>
    <name type="ordered locus">HAPS_2069</name>
</gene>
<feature type="chain" id="PRO_1000146533" description="Large ribosomal subunit protein bL27">
    <location>
        <begin position="1"/>
        <end position="85"/>
    </location>
</feature>
<feature type="region of interest" description="Disordered" evidence="2">
    <location>
        <begin position="1"/>
        <end position="20"/>
    </location>
</feature>
<reference key="1">
    <citation type="journal article" date="2009" name="J. Bacteriol.">
        <title>Complete genome sequence of Haemophilus parasuis SH0165.</title>
        <authorList>
            <person name="Yue M."/>
            <person name="Yang F."/>
            <person name="Yang J."/>
            <person name="Bei W."/>
            <person name="Cai X."/>
            <person name="Chen L."/>
            <person name="Dong J."/>
            <person name="Zhou R."/>
            <person name="Jin M."/>
            <person name="Jin Q."/>
            <person name="Chen H."/>
        </authorList>
    </citation>
    <scope>NUCLEOTIDE SEQUENCE [LARGE SCALE GENOMIC DNA]</scope>
    <source>
        <strain>SH0165</strain>
    </source>
</reference>
<proteinExistence type="inferred from homology"/>